<name>ESPP_ECO57</name>
<sequence length="1300" mass="141758">MNKIYSLKYSHITGGLIAVSELSGRVSSRATGKKKHKRILALCFLGLLQSSYSFASQMDISNFYIRDYMDFAQNKGIFQAGATNIEIVKKDGSTLKLPEVPFPDFSPVANKGSTTSIGGAYSITATHNTKNHHSVATQNWGNSTYKQTDWNTSHPDFAVSRLDKFVVETRGATEGADISLSKQQALERYGVNYKGEKKLIAFRAGSGVVSVKKNGRITPFNEVSYKPEMLNGSFVHIDDWSGWLILTNNQFDEFNNIASQGDSGSALFVYDNQKKKWVVAGTVWGIYNYANGKNHAAYSKWNQTTIDNLKNKYSYNVDMSGAQVATIENGKLTGTGSDTTDIKNKDLIFTGGGDILLKSSFDNGAGGLVFNDKKTYRVNGDDFTFKGAGVDTRNGSTVEWNIRYDNKDNLHKIGDGTLDVRKTQNTNLKTGEGLVILGAEKTFNNIYITSGDGTVRLNAENALSGGEYNGIFFAKNGGTLDLNGYNQSFNKIAATDSGAVITNTSTKKSILSLNNTADYIYHGNINGNLDVLQHHETKKENRRLILDGGVDTTNDISLRNTQLSMQGHATEHAIYRDGAFSCSLPAPMRFLCGSDYVAGMQNTEADAVKQNGNAYKTNNAVSDLSQPDWETGTFRFGTLHLENSDFSVGRNANVIGDIQASKSNITIGDTTAYIDLHAGKNITGDGFGFRQNIVRGNSQGETLFTGGITAEDSTIVIKDKAKALFSNYVYLLNTKATIENGADVTTQSGMFSTSDISISGNLSMTGNPDKDNKFEPSIYLNDASYLLTDDSARLVAKNKASVVGDIHSTKSASIMFGHDESDLSQLSDRTSKGLALGLLGGFDVSYRGSVNAPSASATMNNTWWQLTGDSALKTLKSTNSMVYFTDSANNKKFHTLTVDELATSNSAYAMRTNLSESDKLEVKKHLSGENNILLVDFLQKPTPEKQLNIELVSAPKDTNENVFKASKQTIGFSDVTPVITTRETDDKITWSLTGYNTVANKEATRNAAALFSVDYKAFLNEVNNLNKRMGDLRDINGEAGAWARIMSGTGSASGGFSDNYTHVQVGVDKKHELDGLDLFTGFTVTHTDSSASADVFSGKTKSVGAGLYASAMFDSGAYIDLIGKYVHHDNEYTATFAGLGTRDYSTHSWYAGAEAGYRYHVTEDAWIEPQAELVYGSVSGKQFAWKDQGMHLSMKDKDYNPLIGRTGVDVGKSFSGKDWKVTARAGLGYQFDLLANGETVLRDASGEKRIKGEKDSRMLMSVGLNAEIRDNVRFGLEFEKSAFGKYNVDNAVNANFRYSF</sequence>
<keyword id="KW-0002">3D-structure</keyword>
<keyword id="KW-0998">Cell outer membrane</keyword>
<keyword id="KW-0903">Direct protein sequencing</keyword>
<keyword id="KW-0378">Hydrolase</keyword>
<keyword id="KW-0472">Membrane</keyword>
<keyword id="KW-0574">Periplasm</keyword>
<keyword id="KW-0614">Plasmid</keyword>
<keyword id="KW-0645">Protease</keyword>
<keyword id="KW-1185">Reference proteome</keyword>
<keyword id="KW-0964">Secreted</keyword>
<keyword id="KW-0720">Serine protease</keyword>
<keyword id="KW-0732">Signal</keyword>
<keyword id="KW-0812">Transmembrane</keyword>
<keyword id="KW-1134">Transmembrane beta strand</keyword>
<keyword id="KW-0843">Virulence</keyword>
<keyword id="KW-0865">Zymogen</keyword>
<dbReference type="EC" id="3.4.21.-"/>
<dbReference type="EMBL" id="X97542">
    <property type="protein sequence ID" value="CAA66144.1"/>
    <property type="molecule type" value="Genomic_DNA"/>
</dbReference>
<dbReference type="EMBL" id="AF074613">
    <property type="protein sequence ID" value="AAC70088.1"/>
    <property type="molecule type" value="Genomic_DNA"/>
</dbReference>
<dbReference type="EMBL" id="AB011549">
    <property type="protein sequence ID" value="BAA31836.1"/>
    <property type="molecule type" value="Genomic_DNA"/>
</dbReference>
<dbReference type="EMBL" id="AJ010390">
    <property type="protein sequence ID" value="CAB42538.1"/>
    <property type="molecule type" value="Genomic_DNA"/>
</dbReference>
<dbReference type="PIR" id="T00317">
    <property type="entry name" value="T00317"/>
</dbReference>
<dbReference type="RefSeq" id="NP_052685.1">
    <property type="nucleotide sequence ID" value="NC_002128.1"/>
</dbReference>
<dbReference type="RefSeq" id="WP_001034100.1">
    <property type="nucleotide sequence ID" value="NZ_VOAI01000053.1"/>
</dbReference>
<dbReference type="PDB" id="2QOM">
    <property type="method" value="X-ray"/>
    <property type="resolution" value="2.66 A"/>
    <property type="chains" value="A/B=1024-1300"/>
</dbReference>
<dbReference type="PDB" id="3SLJ">
    <property type="method" value="X-ray"/>
    <property type="resolution" value="2.48 A"/>
    <property type="chains" value="A=999-1300"/>
</dbReference>
<dbReference type="PDB" id="3SLO">
    <property type="method" value="X-ray"/>
    <property type="resolution" value="2.52 A"/>
    <property type="chains" value="A=999-1300"/>
</dbReference>
<dbReference type="PDB" id="3SLT">
    <property type="method" value="X-ray"/>
    <property type="resolution" value="2.46 A"/>
    <property type="chains" value="A=999-1300"/>
</dbReference>
<dbReference type="PDB" id="3SZE">
    <property type="method" value="X-ray"/>
    <property type="resolution" value="2.50 A"/>
    <property type="chains" value="A=56-1023"/>
</dbReference>
<dbReference type="PDB" id="7YE4">
    <property type="method" value="EM"/>
    <property type="resolution" value="3.40 A"/>
    <property type="chains" value="P=948-1300"/>
</dbReference>
<dbReference type="PDB" id="7YE6">
    <property type="method" value="EM"/>
    <property type="resolution" value="3.40 A"/>
    <property type="chains" value="P=948-1300"/>
</dbReference>
<dbReference type="PDB" id="8BNZ">
    <property type="method" value="EM"/>
    <property type="resolution" value="3.50 A"/>
    <property type="chains" value="P=948-1300"/>
</dbReference>
<dbReference type="PDB" id="8BO2">
    <property type="method" value="EM"/>
    <property type="resolution" value="3.10 A"/>
    <property type="chains" value="P=948-1300"/>
</dbReference>
<dbReference type="PDBsum" id="2QOM"/>
<dbReference type="PDBsum" id="3SLJ"/>
<dbReference type="PDBsum" id="3SLO"/>
<dbReference type="PDBsum" id="3SLT"/>
<dbReference type="PDBsum" id="3SZE"/>
<dbReference type="PDBsum" id="7YE4"/>
<dbReference type="PDBsum" id="7YE6"/>
<dbReference type="PDBsum" id="8BNZ"/>
<dbReference type="PDBsum" id="8BO2"/>
<dbReference type="EMDB" id="EMD-16137"/>
<dbReference type="EMDB" id="EMD-16138"/>
<dbReference type="EMDB" id="EMD-18053"/>
<dbReference type="EMDB" id="EMD-18543"/>
<dbReference type="EMDB" id="EMD-18562"/>
<dbReference type="EMDB" id="EMD-26105"/>
<dbReference type="EMDB" id="EMD-26106"/>
<dbReference type="EMDB" id="EMD-26107"/>
<dbReference type="EMDB" id="EMD-26108"/>
<dbReference type="EMDB" id="EMD-26109"/>
<dbReference type="EMDB" id="EMD-26110"/>
<dbReference type="EMDB" id="EMD-26111"/>
<dbReference type="EMDB" id="EMD-26112"/>
<dbReference type="EMDB" id="EMD-26113"/>
<dbReference type="EMDB" id="EMD-26114"/>
<dbReference type="EMDB" id="EMD-33763"/>
<dbReference type="EMDB" id="EMD-33765"/>
<dbReference type="EMDB" id="EMD-40682"/>
<dbReference type="EMDB" id="EMD-40700"/>
<dbReference type="SMR" id="Q7BSW5"/>
<dbReference type="IntAct" id="Q7BSW5">
    <property type="interactions" value="4"/>
</dbReference>
<dbReference type="STRING" id="155864.Z1149"/>
<dbReference type="MEROPS" id="S06.002"/>
<dbReference type="TCDB" id="1.B.12.4.3">
    <property type="family name" value="the autotransporter-1 (at-1) family"/>
</dbReference>
<dbReference type="GeneID" id="1789732"/>
<dbReference type="KEGG" id="ece:Z_L7020"/>
<dbReference type="KEGG" id="ecs:pO157p78"/>
<dbReference type="PATRIC" id="fig|386585.9.peg.90"/>
<dbReference type="eggNOG" id="COG3468">
    <property type="taxonomic scope" value="Bacteria"/>
</dbReference>
<dbReference type="HOGENOM" id="CLU_000723_0_0_6"/>
<dbReference type="OMA" id="VIHAYND"/>
<dbReference type="EvolutionaryTrace" id="Q7BSW5"/>
<dbReference type="Proteomes" id="UP000000558">
    <property type="component" value="Plasmid pO157"/>
</dbReference>
<dbReference type="Proteomes" id="UP000002519">
    <property type="component" value="Plasmid pO157"/>
</dbReference>
<dbReference type="GO" id="GO:0009279">
    <property type="term" value="C:cell outer membrane"/>
    <property type="evidence" value="ECO:0007669"/>
    <property type="project" value="UniProtKB-SubCell"/>
</dbReference>
<dbReference type="GO" id="GO:0009986">
    <property type="term" value="C:cell surface"/>
    <property type="evidence" value="ECO:0007669"/>
    <property type="project" value="UniProtKB-SubCell"/>
</dbReference>
<dbReference type="GO" id="GO:0005576">
    <property type="term" value="C:extracellular region"/>
    <property type="evidence" value="ECO:0007669"/>
    <property type="project" value="UniProtKB-SubCell"/>
</dbReference>
<dbReference type="GO" id="GO:0042597">
    <property type="term" value="C:periplasmic space"/>
    <property type="evidence" value="ECO:0007669"/>
    <property type="project" value="UniProtKB-SubCell"/>
</dbReference>
<dbReference type="GO" id="GO:0004252">
    <property type="term" value="F:serine-type endopeptidase activity"/>
    <property type="evidence" value="ECO:0007669"/>
    <property type="project" value="InterPro"/>
</dbReference>
<dbReference type="GO" id="GO:0006508">
    <property type="term" value="P:proteolysis"/>
    <property type="evidence" value="ECO:0007669"/>
    <property type="project" value="UniProtKB-KW"/>
</dbReference>
<dbReference type="CDD" id="cd01343">
    <property type="entry name" value="PL1_Passenger_AT"/>
    <property type="match status" value="1"/>
</dbReference>
<dbReference type="Gene3D" id="2.160.20.20">
    <property type="match status" value="1"/>
</dbReference>
<dbReference type="Gene3D" id="2.40.10.120">
    <property type="match status" value="1"/>
</dbReference>
<dbReference type="Gene3D" id="2.40.128.130">
    <property type="entry name" value="Autotransporter beta-domain"/>
    <property type="match status" value="1"/>
</dbReference>
<dbReference type="InterPro" id="IPR005546">
    <property type="entry name" value="Autotransporte_beta"/>
</dbReference>
<dbReference type="InterPro" id="IPR036709">
    <property type="entry name" value="Autotransporte_beta_dom_sf"/>
</dbReference>
<dbReference type="InterPro" id="IPR012332">
    <property type="entry name" value="Autotransporter_pectin_lyase_C"/>
</dbReference>
<dbReference type="InterPro" id="IPR006315">
    <property type="entry name" value="OM_autotransptr_brl_dom"/>
</dbReference>
<dbReference type="InterPro" id="IPR011050">
    <property type="entry name" value="Pectin_lyase_fold/virulence"/>
</dbReference>
<dbReference type="InterPro" id="IPR000710">
    <property type="entry name" value="Peptidase_S6"/>
</dbReference>
<dbReference type="InterPro" id="IPR030396">
    <property type="entry name" value="Peptidase_S6_dom"/>
</dbReference>
<dbReference type="NCBIfam" id="TIGR01414">
    <property type="entry name" value="autotrans_barl"/>
    <property type="match status" value="1"/>
</dbReference>
<dbReference type="Pfam" id="PF03797">
    <property type="entry name" value="Autotransporter"/>
    <property type="match status" value="1"/>
</dbReference>
<dbReference type="Pfam" id="PF02395">
    <property type="entry name" value="Peptidase_S6"/>
    <property type="match status" value="1"/>
</dbReference>
<dbReference type="PRINTS" id="PR00921">
    <property type="entry name" value="IGASERPTASE"/>
</dbReference>
<dbReference type="SMART" id="SM00869">
    <property type="entry name" value="Autotransporter"/>
    <property type="match status" value="1"/>
</dbReference>
<dbReference type="SUPFAM" id="SSF103515">
    <property type="entry name" value="Autotransporter"/>
    <property type="match status" value="1"/>
</dbReference>
<dbReference type="SUPFAM" id="SSF51126">
    <property type="entry name" value="Pectin lyase-like"/>
    <property type="match status" value="1"/>
</dbReference>
<dbReference type="PROSITE" id="PS51208">
    <property type="entry name" value="AUTOTRANSPORTER"/>
    <property type="match status" value="1"/>
</dbReference>
<dbReference type="PROSITE" id="PS51691">
    <property type="entry name" value="PEPTIDASE_S6"/>
    <property type="match status" value="1"/>
</dbReference>
<protein>
    <recommendedName>
        <fullName>Serine protease EspP</fullName>
        <ecNumber>3.4.21.-</ecNumber>
    </recommendedName>
    <component>
        <recommendedName>
            <fullName>Secreted autotransporter protein EspP</fullName>
        </recommendedName>
        <alternativeName>
            <fullName>Extracellular serine protease plasmid-encoded EspP</fullName>
        </alternativeName>
    </component>
    <component>
        <recommendedName>
            <fullName>Autotransporter protein EspP translocator</fullName>
        </recommendedName>
    </component>
</protein>
<geneLocation type="plasmid">
    <name>pO157</name>
</geneLocation>
<evidence type="ECO:0000250" key="1"/>
<evidence type="ECO:0000255" key="2">
    <source>
        <dbReference type="PROSITE-ProRule" id="PRU00556"/>
    </source>
</evidence>
<evidence type="ECO:0000255" key="3">
    <source>
        <dbReference type="PROSITE-ProRule" id="PRU01028"/>
    </source>
</evidence>
<evidence type="ECO:0000269" key="4">
    <source>
    </source>
</evidence>
<evidence type="ECO:0000269" key="5">
    <source>
    </source>
</evidence>
<evidence type="ECO:0000305" key="6"/>
<evidence type="ECO:0007829" key="7">
    <source>
        <dbReference type="PDB" id="3SLT"/>
    </source>
</evidence>
<evidence type="ECO:0007829" key="8">
    <source>
        <dbReference type="PDB" id="3SZE"/>
    </source>
</evidence>
<feature type="signal peptide" evidence="5">
    <location>
        <begin position="1"/>
        <end position="55"/>
    </location>
</feature>
<feature type="chain" id="PRO_0000387594" description="Serine protease EspP">
    <location>
        <begin position="56"/>
        <end position="1300"/>
    </location>
</feature>
<feature type="chain" id="PRO_0000042020" description="Secreted autotransporter protein EspP">
    <location>
        <begin position="56"/>
        <end position="1023"/>
    </location>
</feature>
<feature type="chain" id="PRO_0000042021" description="Autotransporter protein EspP translocator" evidence="1">
    <location>
        <begin position="1024"/>
        <end position="1300"/>
    </location>
</feature>
<feature type="domain" description="Peptidase S6" evidence="3">
    <location>
        <begin position="57"/>
        <end position="311"/>
    </location>
</feature>
<feature type="domain" description="Autotransporter" evidence="2">
    <location>
        <begin position="1034"/>
        <end position="1300"/>
    </location>
</feature>
<feature type="active site" description="Charge relay system" evidence="3">
    <location>
        <position position="127"/>
    </location>
</feature>
<feature type="active site" description="Charge relay system" evidence="3">
    <location>
        <position position="156"/>
    </location>
</feature>
<feature type="active site" description="Charge relay system" evidence="3">
    <location>
        <position position="263"/>
    </location>
</feature>
<feature type="site" description="Cleavage">
    <location>
        <begin position="1023"/>
        <end position="1024"/>
    </location>
</feature>
<feature type="strand" evidence="8">
    <location>
        <begin position="57"/>
        <end position="59"/>
    </location>
</feature>
<feature type="strand" evidence="8">
    <location>
        <begin position="61"/>
        <end position="63"/>
    </location>
</feature>
<feature type="helix" evidence="8">
    <location>
        <begin position="65"/>
        <end position="73"/>
    </location>
</feature>
<feature type="strand" evidence="8">
    <location>
        <begin position="86"/>
        <end position="88"/>
    </location>
</feature>
<feature type="strand" evidence="8">
    <location>
        <begin position="94"/>
        <end position="96"/>
    </location>
</feature>
<feature type="strand" evidence="8">
    <location>
        <begin position="121"/>
        <end position="125"/>
    </location>
</feature>
<feature type="helix" evidence="8">
    <location>
        <begin position="126"/>
        <end position="128"/>
    </location>
</feature>
<feature type="helix" evidence="8">
    <location>
        <begin position="133"/>
        <end position="136"/>
    </location>
</feature>
<feature type="strand" evidence="8">
    <location>
        <begin position="137"/>
        <end position="140"/>
    </location>
</feature>
<feature type="strand" evidence="8">
    <location>
        <begin position="143"/>
        <end position="153"/>
    </location>
</feature>
<feature type="turn" evidence="8">
    <location>
        <begin position="154"/>
        <end position="156"/>
    </location>
</feature>
<feature type="strand" evidence="8">
    <location>
        <begin position="157"/>
        <end position="164"/>
    </location>
</feature>
<feature type="helix" evidence="8">
    <location>
        <begin position="182"/>
        <end position="189"/>
    </location>
</feature>
<feature type="strand" evidence="8">
    <location>
        <begin position="191"/>
        <end position="198"/>
    </location>
</feature>
<feature type="strand" evidence="8">
    <location>
        <begin position="200"/>
        <end position="205"/>
    </location>
</feature>
<feature type="strand" evidence="8">
    <location>
        <begin position="208"/>
        <end position="213"/>
    </location>
</feature>
<feature type="strand" evidence="8">
    <location>
        <begin position="216"/>
        <end position="220"/>
    </location>
</feature>
<feature type="helix" evidence="8">
    <location>
        <begin position="227"/>
        <end position="229"/>
    </location>
</feature>
<feature type="strand" evidence="8">
    <location>
        <begin position="231"/>
        <end position="248"/>
    </location>
</feature>
<feature type="strand" evidence="8">
    <location>
        <begin position="251"/>
        <end position="254"/>
    </location>
</feature>
<feature type="strand" evidence="8">
    <location>
        <begin position="266"/>
        <end position="271"/>
    </location>
</feature>
<feature type="turn" evidence="8">
    <location>
        <begin position="272"/>
        <end position="275"/>
    </location>
</feature>
<feature type="strand" evidence="8">
    <location>
        <begin position="276"/>
        <end position="288"/>
    </location>
</feature>
<feature type="helix" evidence="8">
    <location>
        <begin position="290"/>
        <end position="292"/>
    </location>
</feature>
<feature type="strand" evidence="8">
    <location>
        <begin position="294"/>
        <end position="300"/>
    </location>
</feature>
<feature type="helix" evidence="8">
    <location>
        <begin position="303"/>
        <end position="312"/>
    </location>
</feature>
<feature type="strand" evidence="8">
    <location>
        <begin position="314"/>
        <end position="318"/>
    </location>
</feature>
<feature type="strand" evidence="8">
    <location>
        <begin position="324"/>
        <end position="328"/>
    </location>
</feature>
<feature type="strand" evidence="8">
    <location>
        <begin position="331"/>
        <end position="337"/>
    </location>
</feature>
<feature type="strand" evidence="8">
    <location>
        <begin position="344"/>
        <end position="351"/>
    </location>
</feature>
<feature type="strand" evidence="8">
    <location>
        <begin position="353"/>
        <end position="359"/>
    </location>
</feature>
<feature type="strand" evidence="8">
    <location>
        <begin position="368"/>
        <end position="370"/>
    </location>
</feature>
<feature type="strand" evidence="8">
    <location>
        <begin position="375"/>
        <end position="379"/>
    </location>
</feature>
<feature type="strand" evidence="8">
    <location>
        <begin position="384"/>
        <end position="388"/>
    </location>
</feature>
<feature type="strand" evidence="8">
    <location>
        <begin position="390"/>
        <end position="392"/>
    </location>
</feature>
<feature type="strand" evidence="8">
    <location>
        <begin position="397"/>
        <end position="400"/>
    </location>
</feature>
<feature type="strand" evidence="8">
    <location>
        <begin position="402"/>
        <end position="404"/>
    </location>
</feature>
<feature type="strand" evidence="8">
    <location>
        <begin position="410"/>
        <end position="420"/>
    </location>
</feature>
<feature type="strand" evidence="8">
    <location>
        <begin position="428"/>
        <end position="437"/>
    </location>
</feature>
<feature type="strand" evidence="8">
    <location>
        <begin position="446"/>
        <end position="457"/>
    </location>
</feature>
<feature type="strand" evidence="8">
    <location>
        <begin position="466"/>
        <end position="468"/>
    </location>
</feature>
<feature type="strand" evidence="8">
    <location>
        <begin position="471"/>
        <end position="473"/>
    </location>
</feature>
<feature type="strand" evidence="8">
    <location>
        <begin position="478"/>
        <end position="481"/>
    </location>
</feature>
<feature type="strand" evidence="8">
    <location>
        <begin position="487"/>
        <end position="490"/>
    </location>
</feature>
<feature type="strand" evidence="8">
    <location>
        <begin position="499"/>
        <end position="502"/>
    </location>
</feature>
<feature type="strand" evidence="8">
    <location>
        <begin position="505"/>
        <end position="507"/>
    </location>
</feature>
<feature type="strand" evidence="8">
    <location>
        <begin position="509"/>
        <end position="513"/>
    </location>
</feature>
<feature type="strand" evidence="8">
    <location>
        <begin position="519"/>
        <end position="521"/>
    </location>
</feature>
<feature type="strand" evidence="8">
    <location>
        <begin position="523"/>
        <end position="534"/>
    </location>
</feature>
<feature type="strand" evidence="8">
    <location>
        <begin position="544"/>
        <end position="546"/>
    </location>
</feature>
<feature type="strand" evidence="8">
    <location>
        <begin position="548"/>
        <end position="551"/>
    </location>
</feature>
<feature type="strand" evidence="8">
    <location>
        <begin position="556"/>
        <end position="560"/>
    </location>
</feature>
<feature type="strand" evidence="8">
    <location>
        <begin position="562"/>
        <end position="565"/>
    </location>
</feature>
<feature type="helix" evidence="8">
    <location>
        <begin position="596"/>
        <end position="603"/>
    </location>
</feature>
<feature type="helix" evidence="8">
    <location>
        <begin position="605"/>
        <end position="611"/>
    </location>
</feature>
<feature type="helix" evidence="8">
    <location>
        <begin position="614"/>
        <end position="617"/>
    </location>
</feature>
<feature type="strand" evidence="8">
    <location>
        <begin position="632"/>
        <end position="643"/>
    </location>
</feature>
<feature type="strand" evidence="8">
    <location>
        <begin position="645"/>
        <end position="648"/>
    </location>
</feature>
<feature type="strand" evidence="8">
    <location>
        <begin position="652"/>
        <end position="662"/>
    </location>
</feature>
<feature type="strand" evidence="8">
    <location>
        <begin position="664"/>
        <end position="668"/>
    </location>
</feature>
<feature type="strand" evidence="8">
    <location>
        <begin position="670"/>
        <end position="675"/>
    </location>
</feature>
<feature type="turn" evidence="8">
    <location>
        <begin position="676"/>
        <end position="679"/>
    </location>
</feature>
<feature type="turn" evidence="8">
    <location>
        <begin position="684"/>
        <end position="687"/>
    </location>
</feature>
<feature type="strand" evidence="8">
    <location>
        <begin position="693"/>
        <end position="697"/>
    </location>
</feature>
<feature type="strand" evidence="8">
    <location>
        <begin position="702"/>
        <end position="706"/>
    </location>
</feature>
<feature type="strand" evidence="8">
    <location>
        <begin position="708"/>
        <end position="712"/>
    </location>
</feature>
<feature type="strand" evidence="8">
    <location>
        <begin position="714"/>
        <end position="717"/>
    </location>
</feature>
<feature type="strand" evidence="8">
    <location>
        <begin position="721"/>
        <end position="725"/>
    </location>
</feature>
<feature type="strand" evidence="8">
    <location>
        <begin position="729"/>
        <end position="733"/>
    </location>
</feature>
<feature type="strand" evidence="8">
    <location>
        <begin position="735"/>
        <end position="738"/>
    </location>
</feature>
<feature type="strand" evidence="8">
    <location>
        <begin position="743"/>
        <end position="746"/>
    </location>
</feature>
<feature type="strand" evidence="8">
    <location>
        <begin position="750"/>
        <end position="754"/>
    </location>
</feature>
<feature type="strand" evidence="8">
    <location>
        <begin position="756"/>
        <end position="765"/>
    </location>
</feature>
<feature type="strand" evidence="8">
    <location>
        <begin position="777"/>
        <end position="787"/>
    </location>
</feature>
<feature type="strand" evidence="8">
    <location>
        <begin position="793"/>
        <end position="810"/>
    </location>
</feature>
<feature type="strand" evidence="8">
    <location>
        <begin position="813"/>
        <end position="818"/>
    </location>
</feature>
<feature type="helix" evidence="8">
    <location>
        <begin position="832"/>
        <end position="839"/>
    </location>
</feature>
<feature type="strand" evidence="8">
    <location>
        <begin position="842"/>
        <end position="848"/>
    </location>
</feature>
<feature type="strand" evidence="8">
    <location>
        <begin position="850"/>
        <end position="866"/>
    </location>
</feature>
<feature type="strand" evidence="8">
    <location>
        <begin position="870"/>
        <end position="879"/>
    </location>
</feature>
<feature type="strand" evidence="8">
    <location>
        <begin position="881"/>
        <end position="884"/>
    </location>
</feature>
<feature type="strand" evidence="8">
    <location>
        <begin position="895"/>
        <end position="905"/>
    </location>
</feature>
<feature type="strand" evidence="8">
    <location>
        <begin position="907"/>
        <end position="915"/>
    </location>
</feature>
<feature type="strand" evidence="8">
    <location>
        <begin position="919"/>
        <end position="927"/>
    </location>
</feature>
<feature type="strand" evidence="8">
    <location>
        <begin position="931"/>
        <end position="939"/>
    </location>
</feature>
<feature type="strand" evidence="8">
    <location>
        <begin position="943"/>
        <end position="945"/>
    </location>
</feature>
<feature type="strand" evidence="8">
    <location>
        <begin position="949"/>
        <end position="955"/>
    </location>
</feature>
<feature type="helix" evidence="8">
    <location>
        <begin position="960"/>
        <end position="962"/>
    </location>
</feature>
<feature type="strand" evidence="8">
    <location>
        <begin position="963"/>
        <end position="965"/>
    </location>
</feature>
<feature type="strand" evidence="8">
    <location>
        <begin position="975"/>
        <end position="983"/>
    </location>
</feature>
<feature type="strand" evidence="8">
    <location>
        <begin position="985"/>
        <end position="997"/>
    </location>
</feature>
<feature type="helix" evidence="7">
    <location>
        <begin position="999"/>
        <end position="1020"/>
    </location>
</feature>
<feature type="helix" evidence="7">
    <location>
        <begin position="1025"/>
        <end position="1029"/>
    </location>
</feature>
<feature type="strand" evidence="7">
    <location>
        <begin position="1038"/>
        <end position="1052"/>
    </location>
</feature>
<feature type="helix" evidence="7">
    <location>
        <begin position="1053"/>
        <end position="1055"/>
    </location>
</feature>
<feature type="strand" evidence="7">
    <location>
        <begin position="1056"/>
        <end position="1073"/>
    </location>
</feature>
<feature type="strand" evidence="7">
    <location>
        <begin position="1076"/>
        <end position="1093"/>
    </location>
</feature>
<feature type="strand" evidence="7">
    <location>
        <begin position="1096"/>
        <end position="1113"/>
    </location>
</feature>
<feature type="strand" evidence="7">
    <location>
        <begin position="1116"/>
        <end position="1134"/>
    </location>
</feature>
<feature type="helix" evidence="7">
    <location>
        <begin position="1136"/>
        <end position="1138"/>
    </location>
</feature>
<feature type="strand" evidence="7">
    <location>
        <begin position="1140"/>
        <end position="1157"/>
    </location>
</feature>
<feature type="strand" evidence="7">
    <location>
        <begin position="1159"/>
        <end position="1178"/>
    </location>
</feature>
<feature type="strand" evidence="7">
    <location>
        <begin position="1182"/>
        <end position="1187"/>
    </location>
</feature>
<feature type="strand" evidence="7">
    <location>
        <begin position="1190"/>
        <end position="1196"/>
    </location>
</feature>
<feature type="strand" evidence="7">
    <location>
        <begin position="1202"/>
        <end position="1216"/>
    </location>
</feature>
<feature type="strand" evidence="7">
    <location>
        <begin position="1219"/>
        <end position="1233"/>
    </location>
</feature>
<feature type="strand" evidence="7">
    <location>
        <begin position="1238"/>
        <end position="1242"/>
    </location>
</feature>
<feature type="strand" evidence="7">
    <location>
        <begin position="1247"/>
        <end position="1251"/>
    </location>
</feature>
<feature type="strand" evidence="7">
    <location>
        <begin position="1256"/>
        <end position="1268"/>
    </location>
</feature>
<feature type="turn" evidence="7">
    <location>
        <begin position="1269"/>
        <end position="1271"/>
    </location>
</feature>
<feature type="strand" evidence="7">
    <location>
        <begin position="1272"/>
        <end position="1300"/>
    </location>
</feature>
<gene>
    <name type="primary">espP</name>
    <name type="ordered locus">L7020</name>
    <name type="ordered locus">ECO57PM78</name>
</gene>
<proteinExistence type="evidence at protein level"/>
<reference key="1">
    <citation type="journal article" date="1997" name="Mol. Microbiol.">
        <title>EspP, a novel extracellular serine protease of enterohaemorrhagic Escherichia coli O157:H7 cleaves human coagulation factor V.</title>
        <authorList>
            <person name="Brunder W."/>
            <person name="Schmidt H."/>
            <person name="Karch H."/>
        </authorList>
    </citation>
    <scope>NUCLEOTIDE SEQUENCE [GENOMIC DNA]</scope>
    <scope>PROTEIN SEQUENCE OF 56-65 AND 1024-1033</scope>
    <scope>FUNCTION</scope>
    <scope>ACTIVITY REGULATION</scope>
    <source>
        <strain>O157:H7 / EDL933 / ATCC 700927 / EHEC</strain>
    </source>
</reference>
<reference key="2">
    <citation type="journal article" date="1998" name="Nucleic Acids Res.">
        <title>The complete DNA sequence and analysis of the large virulence plasmid of Escherichia coli O157:H7.</title>
        <authorList>
            <person name="Burland V."/>
            <person name="Shao Y."/>
            <person name="Perna N.T."/>
            <person name="Plunkett G. III"/>
            <person name="Sofia H.J."/>
            <person name="Blattner F.R."/>
        </authorList>
    </citation>
    <scope>NUCLEOTIDE SEQUENCE [LARGE SCALE GENOMIC DNA]</scope>
    <source>
        <strain>O157:H7 / EDL933 / ATCC 700927 / EHEC</strain>
    </source>
</reference>
<reference key="3">
    <citation type="journal article" date="1998" name="DNA Res.">
        <title>Complete nucleotide sequences of 93-kb and 3.3-kb plasmids of an enterohemorrhagic Escherichia coli O157:H7 derived from Sakai outbreak.</title>
        <authorList>
            <person name="Makino K."/>
            <person name="Ishii K."/>
            <person name="Yasunaga T."/>
            <person name="Hattori M."/>
            <person name="Yokoyama K."/>
            <person name="Yatsudo H.C."/>
            <person name="Kubota Y."/>
            <person name="Yamaichi Y."/>
            <person name="Iida T."/>
            <person name="Yamamoto K."/>
            <person name="Honda T."/>
            <person name="Han C.G."/>
            <person name="Ohtsubo A."/>
            <person name="Kasamatsu M."/>
            <person name="Hayashi T."/>
            <person name="Kuhara S."/>
            <person name="Shinagawa H."/>
        </authorList>
    </citation>
    <scope>NUCLEOTIDE SEQUENCE [LARGE SCALE GENOMIC DNA]</scope>
    <source>
        <strain>O157:H7 / Sakai / RIMD 0509952 / EHEC</strain>
    </source>
</reference>
<reference key="4">
    <citation type="journal article" date="1999" name="Microbiology">
        <title>The large plasmids of Shiga-toxin-producing Escherichia coli (STEC) are highly variable genetic elements.</title>
        <authorList>
            <person name="Brunder W."/>
            <person name="Schmidt H."/>
            <person name="Frosch M."/>
            <person name="Karch H."/>
        </authorList>
    </citation>
    <scope>NUCLEOTIDE SEQUENCE [GENOMIC DNA] OF 455-1300</scope>
    <source>
        <strain>O157:H7 / 3010/96 / EHEC</strain>
    </source>
</reference>
<reference key="5">
    <citation type="journal article" date="2004" name="J. Biol. Chem.">
        <title>Hydrophobic residues of the autotransporter EspP linker domain are important for outer membrane translocation of its passenger.</title>
        <authorList>
            <person name="Velarde J.J."/>
            <person name="Nataro J.P."/>
        </authorList>
    </citation>
    <scope>MUTAGENESIS</scope>
</reference>
<reference key="6">
    <citation type="journal article" date="2005" name="Proc. Natl. Acad. Sci. U.S.A.">
        <title>An unusual signal peptide facilitates late steps in the biogenesis of a bacterial autotransporter.</title>
        <authorList>
            <person name="Szabady R.L."/>
            <person name="Peterson J.H."/>
            <person name="Skillman K.M."/>
            <person name="Bernstein H.D."/>
        </authorList>
    </citation>
    <scope>FUNCTION OF THE SIGNAL PEPTIDE</scope>
    <source>
        <strain>O157:H7 / EDL933 / ATCC 700927 / EHEC</strain>
    </source>
</reference>
<comment type="function">
    <text evidence="4 5">Serine protease capable of cleaving pepsin A and human coagulation factor V, which may contribute to the mucosal hemorrhage observed in hemorrhagic colitis.</text>
</comment>
<comment type="activity regulation">
    <text evidence="5">Inhibition of cytotoxic activity by phenylmethylsulfonyl fluoride.</text>
</comment>
<comment type="interaction">
    <interactant intactId="EBI-6408724">
        <id>Q7BSW5</id>
    </interactant>
    <interactant intactId="EBI-6408783">
        <id>P0ABZ8</id>
        <label>surA</label>
    </interactant>
    <organismsDiffer>false</organismsDiffer>
    <experiments>3</experiments>
</comment>
<comment type="subcellular location">
    <molecule>Serine protease EspP</molecule>
    <subcellularLocation>
        <location evidence="1">Periplasm</location>
    </subcellularLocation>
</comment>
<comment type="subcellular location">
    <molecule>Secreted autotransporter protein EspP</molecule>
    <subcellularLocation>
        <location>Secreted</location>
    </subcellularLocation>
    <subcellularLocation>
        <location>Cell surface</location>
    </subcellularLocation>
</comment>
<comment type="subcellular location">
    <molecule>Autotransporter protein EspP translocator</molecule>
    <subcellularLocation>
        <location evidence="1">Cell outer membrane</location>
        <topology evidence="1">Multi-pass membrane protein</topology>
    </subcellularLocation>
    <text evidence="1">The cleaved C-terminal fragment (autotransporter domain) is localized in the outer membrane.</text>
</comment>
<comment type="induction">
    <text>Expression is optimal at 37 degrees Celsius, and inhibited at 20 degrees Celsius. It is dependent on both temperature and pH.</text>
</comment>
<comment type="domain">
    <text evidence="4">The signal peptide, cleaved at the inner membrane, guides the autotransporter protein to the periplasmic space. Then, insertion of the C-terminal translocator domain in the outer membrane forms a hydrophilic pore for the translocation of the passenger domain to the bacterial cell surface, with subsequent cleavage (PubMed:15615856).</text>
</comment>
<comment type="PTM">
    <text>Cleaved to release the mature protein from the outer membrane.</text>
</comment>
<comment type="miscellaneous">
    <text>Mutagenesis experiments show the presence of a linker region, which is required for the translocation of the protease domain across the outer membrane. This linker region is located immediately upstream of the C-terminal helper domain.</text>
</comment>
<comment type="miscellaneous">
    <text>The signal peptide may also act as a transient membrane anchor that prevents the protease domain from misfolding in the periplasm.</text>
</comment>
<comment type="caution">
    <text evidence="6">Strain 3010/96 exhibits a partial deletion of the gene.</text>
</comment>
<organism>
    <name type="scientific">Escherichia coli O157:H7</name>
    <dbReference type="NCBI Taxonomy" id="83334"/>
    <lineage>
        <taxon>Bacteria</taxon>
        <taxon>Pseudomonadati</taxon>
        <taxon>Pseudomonadota</taxon>
        <taxon>Gammaproteobacteria</taxon>
        <taxon>Enterobacterales</taxon>
        <taxon>Enterobacteriaceae</taxon>
        <taxon>Escherichia</taxon>
    </lineage>
</organism>
<accession>Q7BSW5</accession>
<accession>O32555</accession>
<accession>Q9S6R3</accession>